<reference key="1">
    <citation type="journal article" date="2013" name="Proc. Natl. Acad. Sci. U.S.A.">
        <title>Tudor domain containing 12 (TDRD12) is essential for secondary PIWI interacting RNA biogenesis in mice.</title>
        <authorList>
            <person name="Pandey R.R."/>
            <person name="Tokuzawa Y."/>
            <person name="Yang Z."/>
            <person name="Hayashi E."/>
            <person name="Ichisaka T."/>
            <person name="Kajita S."/>
            <person name="Asano Y."/>
            <person name="Kunieda T."/>
            <person name="Sachidanandam R."/>
            <person name="Chuma S."/>
            <person name="Yamanaka S."/>
            <person name="Pillai R.S."/>
        </authorList>
    </citation>
    <scope>NUCLEOTIDE SEQUENCE [MRNA]</scope>
    <scope>SUBCELLULAR LOCATION</scope>
    <scope>INTERACTION WITH SIWI</scope>
</reference>
<reference key="2">
    <citation type="journal article" date="2008" name="Insect Biochem. Mol. Biol.">
        <title>The genome of a lepidopteran model insect, the silkworm Bombyx mori.</title>
        <authorList>
            <consortium name="International Silkworm Genome Consortium"/>
        </authorList>
    </citation>
    <scope>NUCLEOTIDE SEQUENCE [LARGE SCALE GENOMIC DNA]</scope>
    <source>
        <strain>p50T</strain>
    </source>
</reference>
<reference evidence="9 11" key="3">
    <citation type="journal article" date="2006" name="Insect Biochem. Mol. Biol.">
        <title>A novel RNA helicase-like protein during early embryonic development in silkworm Bombyx mori: molecular characterization and intracellular localization.</title>
        <authorList>
            <person name="Sawada H."/>
            <person name="Yamahama Y."/>
            <person name="Yamamoto T."/>
            <person name="Mase K."/>
            <person name="Ogawa H."/>
            <person name="Iino T."/>
        </authorList>
    </citation>
    <scope>NUCLEOTIDE SEQUENCE [MRNA] OF 264-1170</scope>
    <scope>SUBCELLULAR LOCATION</scope>
    <scope>TISSUE SPECIFICITY</scope>
    <scope>DEVELOPMENTAL STAGE</scope>
    <source>
        <strain>p50T</strain>
        <tissue evidence="6">Egg</tissue>
    </source>
</reference>
<reference key="4">
    <citation type="journal article" date="2016" name="Mol. Cell">
        <title>PIWI slicing and EXD1 drive biogenesis of nuclear piRNAs from cytosolic targets of the mouse piRNA pathway.</title>
        <authorList>
            <person name="Yang Z."/>
            <person name="Chen K.M."/>
            <person name="Pandey R.R."/>
            <person name="Homolka D."/>
            <person name="Reuter M."/>
            <person name="Janeiro B.K."/>
            <person name="Sachidanandam R."/>
            <person name="Fauvarque M.O."/>
            <person name="McCarthy A.A."/>
            <person name="Pillai R.S."/>
        </authorList>
    </citation>
    <scope>FUNCTION</scope>
    <scope>IDENTIFICATION IN THE PET COMPLEX</scope>
</reference>
<evidence type="ECO:0000255" key="1">
    <source>
        <dbReference type="PROSITE-ProRule" id="PRU00211"/>
    </source>
</evidence>
<evidence type="ECO:0000255" key="2">
    <source>
        <dbReference type="PROSITE-ProRule" id="PRU00541"/>
    </source>
</evidence>
<evidence type="ECO:0000255" key="3">
    <source>
        <dbReference type="PROSITE-ProRule" id="PRU00542"/>
    </source>
</evidence>
<evidence type="ECO:0000255" key="4">
    <source>
        <dbReference type="PROSITE-ProRule" id="PRU00547"/>
    </source>
</evidence>
<evidence type="ECO:0000256" key="5">
    <source>
        <dbReference type="SAM" id="MobiDB-lite"/>
    </source>
</evidence>
<evidence type="ECO:0000269" key="6">
    <source>
    </source>
</evidence>
<evidence type="ECO:0000269" key="7">
    <source>
    </source>
</evidence>
<evidence type="ECO:0000269" key="8">
    <source>
    </source>
</evidence>
<evidence type="ECO:0000305" key="9"/>
<evidence type="ECO:0000305" key="10">
    <source>
    </source>
</evidence>
<evidence type="ECO:0000312" key="11">
    <source>
        <dbReference type="EMBL" id="BAE93115.1"/>
    </source>
</evidence>
<name>TDR12_BOMMO</name>
<proteinExistence type="evidence at protein level"/>
<organism>
    <name type="scientific">Bombyx mori</name>
    <name type="common">Silk moth</name>
    <dbReference type="NCBI Taxonomy" id="7091"/>
    <lineage>
        <taxon>Eukaryota</taxon>
        <taxon>Metazoa</taxon>
        <taxon>Ecdysozoa</taxon>
        <taxon>Arthropoda</taxon>
        <taxon>Hexapoda</taxon>
        <taxon>Insecta</taxon>
        <taxon>Pterygota</taxon>
        <taxon>Neoptera</taxon>
        <taxon>Endopterygota</taxon>
        <taxon>Lepidoptera</taxon>
        <taxon>Glossata</taxon>
        <taxon>Ditrysia</taxon>
        <taxon>Bombycoidea</taxon>
        <taxon>Bombycidae</taxon>
        <taxon>Bombycinae</taxon>
        <taxon>Bombyx</taxon>
    </lineage>
</organism>
<protein>
    <recommendedName>
        <fullName>Putative ATP-dependent RNA helicase TDRD12</fullName>
        <ecNumber>3.6.4.13</ecNumber>
    </recommendedName>
    <alternativeName>
        <fullName evidence="11">RNA helicase-like protein</fullName>
    </alternativeName>
    <alternativeName>
        <fullName>Tudor domain-containing protein 12</fullName>
        <shortName>BmTdrd12</shortName>
    </alternativeName>
</protein>
<feature type="chain" id="PRO_0000407281" description="Putative ATP-dependent RNA helicase TDRD12">
    <location>
        <begin position="1"/>
        <end position="1759"/>
    </location>
</feature>
<feature type="domain" description="Tudor 1" evidence="1">
    <location>
        <begin position="74"/>
        <end position="153"/>
    </location>
</feature>
<feature type="domain" description="Helicase ATP-binding" evidence="2">
    <location>
        <begin position="611"/>
        <end position="789"/>
    </location>
</feature>
<feature type="domain" description="Helicase C-terminal" evidence="3">
    <location>
        <begin position="823"/>
        <end position="980"/>
    </location>
</feature>
<feature type="domain" description="Tudor 2" evidence="1">
    <location>
        <begin position="1335"/>
        <end position="1394"/>
    </location>
</feature>
<feature type="domain" description="CS" evidence="4">
    <location>
        <begin position="1618"/>
        <end position="1704"/>
    </location>
</feature>
<feature type="region of interest" description="Disordered" evidence="5">
    <location>
        <begin position="480"/>
        <end position="506"/>
    </location>
</feature>
<feature type="compositionally biased region" description="Low complexity" evidence="5">
    <location>
        <begin position="480"/>
        <end position="495"/>
    </location>
</feature>
<feature type="binding site" evidence="2">
    <location>
        <begin position="624"/>
        <end position="631"/>
    </location>
    <ligand>
        <name>ATP</name>
        <dbReference type="ChEBI" id="CHEBI:30616"/>
    </ligand>
</feature>
<feature type="sequence conflict" description="In Ref. 1; no nucleotide entry." evidence="9" ref="1">
    <original>S</original>
    <variation>A</variation>
    <location>
        <position position="270"/>
    </location>
</feature>
<feature type="sequence conflict" description="In Ref. 3; BAE93115." evidence="9" ref="3">
    <original>K</original>
    <variation>E</variation>
    <location>
        <position position="297"/>
    </location>
</feature>
<feature type="sequence conflict" description="In Ref. 3; BAE93115." evidence="9" ref="3">
    <original>K</original>
    <variation>N</variation>
    <location>
        <position position="331"/>
    </location>
</feature>
<feature type="sequence conflict" description="In Ref. 3; BAE93115." evidence="9" ref="3">
    <original>D</original>
    <variation>N</variation>
    <location>
        <position position="395"/>
    </location>
</feature>
<feature type="sequence conflict" description="In Ref. 3; BAE93115." evidence="9" ref="3">
    <original>D</original>
    <variation>G</variation>
    <location>
        <position position="493"/>
    </location>
</feature>
<feature type="sequence conflict" description="In Ref. 3; BAE93115." evidence="9" ref="3">
    <original>SKS</original>
    <variation>IKI</variation>
    <location>
        <begin position="664"/>
        <end position="666"/>
    </location>
</feature>
<feature type="sequence conflict" description="In Ref. 3; BAE93115." evidence="9" ref="3">
    <original>P</original>
    <variation>L</variation>
    <location>
        <position position="784"/>
    </location>
</feature>
<feature type="sequence conflict" description="In Ref. 3; BAE93115." evidence="9" ref="3">
    <original>N</original>
    <variation>S</variation>
    <location>
        <position position="857"/>
    </location>
</feature>
<feature type="sequence conflict" description="In Ref. 1; no nucleotide entry." evidence="9" ref="1">
    <original>A</original>
    <variation>P</variation>
    <location>
        <position position="1534"/>
    </location>
</feature>
<feature type="sequence conflict" description="In Ref. 1; no nucleotide entry." evidence="9" ref="1">
    <original>EY</original>
    <variation>DN</variation>
    <location>
        <begin position="1545"/>
        <end position="1546"/>
    </location>
</feature>
<gene>
    <name type="primary">TDRD12</name>
    <name type="synonym">RHL</name>
</gene>
<sequence length="1759" mass="199878">MASDYYQVEILHYLNPNLIWVEVLNSPNEISFEQLGVYGILPIDASLDVERPGLKLQRSEDWMPATAILMKNIFQNLEQVWFSPTHIDRRSSIFDNNIHKYGELIIKKNGVQLYLSKELVKAGLATEDPCQFHQYMSLGKIKTKLSNTETRAVIKNLEEYYRKSSKPKELWQKSVHQNTSIFHAGERLQALTVKNLERHNNRQNIMLLENKLKDLEQCKGSDEVSLGRGVCRVPSNKSEMVMLTNKRLKNRLELLSKINMKSDATDAVKSTKRNFSGDGQRKNFENDFESDDESVKKVSIANTINTSDGSANVVDKLLDEKQIDNVFNNKKQICYTESTRRNPVKKAACIVYGPPSINIDKLPLKEAPKMTKTVKWTPHVDCDKEASEVSFGDVDSHVKLDVKNLDKFHEIADRIEIEKTIPVDVNIHKDLYDSMINNKNESESKIMETANLKTEMKNLRKSSILQSKLKQFDKFNVSSNSAASESSTKSSMDSSRISDEDDLSSDDEMSEIMETFKLNLATPKKSEAKHTIDHIEVNNTKLNANPFKNLDGSKSVFVDKLTSPVLLVHTKRNNKVQPCSLLRDVPFGTSIHVVLRNMGIKHPTRLQTVSWGTILRGLSTFLISPPRSGKTMGYLPAVCRLVRDFRKESPDSCGPKCIIVCATSKSVSEVERISKMLLGLEDKVFACYSGMDNLSVTTALLNGCDLLICTPKSIVRLLQNDLSVDLRDLTTFVVDDCERISDVYSNEVKYVLYEIKNMLKNRVNKELKVQIVVASRIWCDFLEPIVLKAPDSVVCIGAFQELILYSKISTTVDFLRPENKIANVLQFIDSVQGPKRTVVVCRADNEVKAVESSLRYNNRVVFACDNTMNIHDLYNLNVVWGDFEDPTLGPILVCCDSNLVHLNVTDASYLIHYSLPALFSTFCKRFSVLNDNYPSIFKNESRDLKVKVLMDESNVEQLPKILNFLKRCTENVPKILDEVSEKILNEKDLAKVKDLVPLCDNLLSLGICPDTWNCTERHRIFKECDSPADWIPKNGVVTFQILYFHSAVMYSARLLSNTVDGETTKYPQTYSTLSLKMGMYFSKESSRRLHGIPMVGDVCAVSKKQNFFIRCQVVKIISFYKNGNPNYVVIKLIDEEKFEQSRDIYLYHLPDEFKDMKTYVVQVRLANIQPQDKDITFSCLAKNELEKIVEKNEDLFMRGHVAMSVGSCIFVDTLEACLDLSSLSETVVRHNFKQELLNAHAVPNPKHLSILEEMCEKSGLIVKAVTNEQVVPKPIPVLPAAQWAHLEDDLSSVYLASVEDMDKLFVRLVKFESCMKLLNIEINKYVSENTVPLDGSNVGDIVLAKFPDDSMYERARIDHIYSEDKVKCFFVDQGDWRDVSTNDLATITENFITQLPFQAIECRLIGIRPFGEQWTEFSTNWFSDHCFEDAKGNLKHLYVKHFTKEKADCTGGHKYGVALIDTYTNEDIIVNQLLIDLNLAKENVDEIAYLSEIKCNKTVLNNDATVDEEEGSLSGVSEPESNINVPLDKVFLKAPIRSVPLVDSEYETSDSDTWQINRPEDFKALFMRTRPESSKIIPMITANEVQNNADGETSKDTSTILEEKGQLPEKVKDDELKLSKPKICWSQNKNTVKLKILIAGIEDYKLKIEDRAVAFSANHCDVEYGFKLELYGVVDVNKSRHSNKGQYVLVTMTKLMCRNWLALTKEGDSQKWIVYDVDTIEASSDEEVYRDDTLEVIKNIHNTNNGSDSEDDDFLDDVS</sequence>
<dbReference type="EC" id="3.6.4.13"/>
<dbReference type="EMBL" id="AB252573">
    <property type="protein sequence ID" value="BAE93115.1"/>
    <property type="status" value="ALT_FRAME"/>
    <property type="molecule type" value="mRNA"/>
</dbReference>
<dbReference type="RefSeq" id="NP_001037005.2">
    <property type="nucleotide sequence ID" value="NM_001043540.2"/>
</dbReference>
<dbReference type="SMR" id="Q1XG89"/>
<dbReference type="FunCoup" id="Q1XG89">
    <property type="interactions" value="1"/>
</dbReference>
<dbReference type="STRING" id="7091.Q1XG89"/>
<dbReference type="PaxDb" id="7091-BGIBMGA009774-TA"/>
<dbReference type="EnsemblMetazoa" id="NM_001043540.2">
    <property type="protein sequence ID" value="NP_001037005.2"/>
    <property type="gene ID" value="GeneID_692554"/>
</dbReference>
<dbReference type="GeneID" id="692554"/>
<dbReference type="KEGG" id="bmor:692554"/>
<dbReference type="CTD" id="91646"/>
<dbReference type="eggNOG" id="KOG0334">
    <property type="taxonomic scope" value="Eukaryota"/>
</dbReference>
<dbReference type="eggNOG" id="KOG2279">
    <property type="taxonomic scope" value="Eukaryota"/>
</dbReference>
<dbReference type="HOGENOM" id="CLU_238314_0_0_1"/>
<dbReference type="InParanoid" id="Q1XG89"/>
<dbReference type="Proteomes" id="UP000005204">
    <property type="component" value="Unassembled WGS sequence"/>
</dbReference>
<dbReference type="GO" id="GO:0005694">
    <property type="term" value="C:chromosome"/>
    <property type="evidence" value="ECO:0007669"/>
    <property type="project" value="UniProtKB-SubCell"/>
</dbReference>
<dbReference type="GO" id="GO:0005829">
    <property type="term" value="C:cytosol"/>
    <property type="evidence" value="ECO:0007669"/>
    <property type="project" value="UniProtKB-SubCell"/>
</dbReference>
<dbReference type="GO" id="GO:0031965">
    <property type="term" value="C:nuclear membrane"/>
    <property type="evidence" value="ECO:0007669"/>
    <property type="project" value="UniProtKB-SubCell"/>
</dbReference>
<dbReference type="GO" id="GO:0043186">
    <property type="term" value="C:P granule"/>
    <property type="evidence" value="ECO:0000314"/>
    <property type="project" value="UniProtKB"/>
</dbReference>
<dbReference type="GO" id="GO:1990923">
    <property type="term" value="C:PET complex"/>
    <property type="evidence" value="ECO:0000314"/>
    <property type="project" value="UniProtKB"/>
</dbReference>
<dbReference type="GO" id="GO:0005524">
    <property type="term" value="F:ATP binding"/>
    <property type="evidence" value="ECO:0007669"/>
    <property type="project" value="UniProtKB-KW"/>
</dbReference>
<dbReference type="GO" id="GO:0016887">
    <property type="term" value="F:ATP hydrolysis activity"/>
    <property type="evidence" value="ECO:0007669"/>
    <property type="project" value="RHEA"/>
</dbReference>
<dbReference type="GO" id="GO:0003676">
    <property type="term" value="F:nucleic acid binding"/>
    <property type="evidence" value="ECO:0007669"/>
    <property type="project" value="InterPro"/>
</dbReference>
<dbReference type="GO" id="GO:0003724">
    <property type="term" value="F:RNA helicase activity"/>
    <property type="evidence" value="ECO:0007669"/>
    <property type="project" value="UniProtKB-EC"/>
</dbReference>
<dbReference type="GO" id="GO:0042078">
    <property type="term" value="P:germ-line stem cell division"/>
    <property type="evidence" value="ECO:0007669"/>
    <property type="project" value="TreeGrafter"/>
</dbReference>
<dbReference type="GO" id="GO:0051321">
    <property type="term" value="P:meiotic cell cycle"/>
    <property type="evidence" value="ECO:0007669"/>
    <property type="project" value="UniProtKB-KW"/>
</dbReference>
<dbReference type="GO" id="GO:0031047">
    <property type="term" value="P:regulatory ncRNA-mediated gene silencing"/>
    <property type="evidence" value="ECO:0007669"/>
    <property type="project" value="UniProtKB-KW"/>
</dbReference>
<dbReference type="GO" id="GO:0007283">
    <property type="term" value="P:spermatogenesis"/>
    <property type="evidence" value="ECO:0007669"/>
    <property type="project" value="UniProtKB-KW"/>
</dbReference>
<dbReference type="CDD" id="cd20435">
    <property type="entry name" value="Tudor_TDRD12_rpt2"/>
    <property type="match status" value="1"/>
</dbReference>
<dbReference type="Gene3D" id="2.30.30.140">
    <property type="match status" value="1"/>
</dbReference>
<dbReference type="Gene3D" id="2.40.50.90">
    <property type="match status" value="1"/>
</dbReference>
<dbReference type="Gene3D" id="2.60.40.790">
    <property type="match status" value="1"/>
</dbReference>
<dbReference type="Gene3D" id="3.40.50.300">
    <property type="entry name" value="P-loop containing nucleotide triphosphate hydrolases"/>
    <property type="match status" value="1"/>
</dbReference>
<dbReference type="InterPro" id="IPR007052">
    <property type="entry name" value="CS_dom"/>
</dbReference>
<dbReference type="InterPro" id="IPR011545">
    <property type="entry name" value="DEAD/DEAH_box_helicase_dom"/>
</dbReference>
<dbReference type="InterPro" id="IPR014001">
    <property type="entry name" value="Helicase_ATP-bd"/>
</dbReference>
<dbReference type="InterPro" id="IPR008978">
    <property type="entry name" value="HSP20-like_chaperone"/>
</dbReference>
<dbReference type="InterPro" id="IPR027417">
    <property type="entry name" value="P-loop_NTPase"/>
</dbReference>
<dbReference type="InterPro" id="IPR035437">
    <property type="entry name" value="SNase_OB-fold_sf"/>
</dbReference>
<dbReference type="InterPro" id="IPR002999">
    <property type="entry name" value="Tudor"/>
</dbReference>
<dbReference type="PANTHER" id="PTHR22655">
    <property type="entry name" value="ATP-DEPENDENT RNA HELICASE TDRD12-RELATED"/>
    <property type="match status" value="1"/>
</dbReference>
<dbReference type="PANTHER" id="PTHR22655:SF2">
    <property type="entry name" value="ATP-DEPENDENT RNA HELICASE TDRD12-RELATED"/>
    <property type="match status" value="1"/>
</dbReference>
<dbReference type="Pfam" id="PF04969">
    <property type="entry name" value="CS"/>
    <property type="match status" value="1"/>
</dbReference>
<dbReference type="Pfam" id="PF00270">
    <property type="entry name" value="DEAD"/>
    <property type="match status" value="1"/>
</dbReference>
<dbReference type="Pfam" id="PF00567">
    <property type="entry name" value="TUDOR"/>
    <property type="match status" value="1"/>
</dbReference>
<dbReference type="SMART" id="SM00487">
    <property type="entry name" value="DEXDc"/>
    <property type="match status" value="1"/>
</dbReference>
<dbReference type="SMART" id="SM00333">
    <property type="entry name" value="TUDOR"/>
    <property type="match status" value="1"/>
</dbReference>
<dbReference type="SUPFAM" id="SSF49764">
    <property type="entry name" value="HSP20-like chaperones"/>
    <property type="match status" value="1"/>
</dbReference>
<dbReference type="SUPFAM" id="SSF52540">
    <property type="entry name" value="P-loop containing nucleoside triphosphate hydrolases"/>
    <property type="match status" value="1"/>
</dbReference>
<dbReference type="SUPFAM" id="SSF63748">
    <property type="entry name" value="Tudor/PWWP/MBT"/>
    <property type="match status" value="2"/>
</dbReference>
<dbReference type="PROSITE" id="PS51203">
    <property type="entry name" value="CS"/>
    <property type="match status" value="1"/>
</dbReference>
<dbReference type="PROSITE" id="PS51192">
    <property type="entry name" value="HELICASE_ATP_BIND_1"/>
    <property type="match status" value="1"/>
</dbReference>
<dbReference type="PROSITE" id="PS51194">
    <property type="entry name" value="HELICASE_CTER"/>
    <property type="match status" value="1"/>
</dbReference>
<dbReference type="PROSITE" id="PS50304">
    <property type="entry name" value="TUDOR"/>
    <property type="match status" value="1"/>
</dbReference>
<accession>Q1XG89</accession>
<accession>H9JJS3</accession>
<comment type="function">
    <text evidence="10">Probable ATP-binding RNA helicase required during spermatogenesis to repress transposable elements and preventing their mobilization, which is essential for the germline integrity. Acts via the piRNA metabolic process, which mediates the repression of transposable elements during meiosis by forming complexes composed of piRNAs and Piwi proteins and governs the methylation and subsequent repression of transposons.</text>
</comment>
<comment type="catalytic activity">
    <reaction>
        <text>ATP + H2O = ADP + phosphate + H(+)</text>
        <dbReference type="Rhea" id="RHEA:13065"/>
        <dbReference type="ChEBI" id="CHEBI:15377"/>
        <dbReference type="ChEBI" id="CHEBI:15378"/>
        <dbReference type="ChEBI" id="CHEBI:30616"/>
        <dbReference type="ChEBI" id="CHEBI:43474"/>
        <dbReference type="ChEBI" id="CHEBI:456216"/>
        <dbReference type="EC" id="3.6.4.13"/>
    </reaction>
</comment>
<comment type="subunit">
    <text evidence="7 8">Interacts (via Tudor domain 2) with Siwi (PubMed:24067652). Component of the PET complex, at least composed of EXD1, SIWI, TDRD12 and piRNAs (PubMed:26669262).</text>
</comment>
<comment type="subcellular location">
    <subcellularLocation>
        <location evidence="6">Chromosome</location>
    </subcellularLocation>
    <subcellularLocation>
        <location evidence="6">Cytoplasm</location>
        <location evidence="6">Cytosol</location>
    </subcellularLocation>
    <subcellularLocation>
        <location evidence="6">Nucleus membrane</location>
        <topology>Peripheral membrane protein</topology>
    </subcellularLocation>
    <text evidence="6 7">At 36 hours after oviposition, detected in the nucleus and the cytosol where it is associated with chromosomes and to the surface of the nuclear membrane (PubMed:17098166). Component of the meiotic nuage, also named P granule, a germ-cell-specific organelle required to repress transposon activity during meiosis (PubMed:24067652).</text>
</comment>
<comment type="tissue specificity">
    <text evidence="6">Expressed in the yolk cells. Not detected in yolk granules.</text>
</comment>
<comment type="developmental stage">
    <text evidence="6">Detected in non-diapause eggs through all stages of development. Detected only from 0-12 hours after oviposition in diapause eggs. Also expressed in diapause eggs following artificial diapause termination.</text>
</comment>
<comment type="sequence caution" evidence="9">
    <conflict type="frameshift">
        <sequence resource="EMBL-CDS" id="BAE93115"/>
    </conflict>
</comment>
<keyword id="KW-0067">ATP-binding</keyword>
<keyword id="KW-0158">Chromosome</keyword>
<keyword id="KW-0963">Cytoplasm</keyword>
<keyword id="KW-0217">Developmental protein</keyword>
<keyword id="KW-0221">Differentiation</keyword>
<keyword id="KW-0347">Helicase</keyword>
<keyword id="KW-0378">Hydrolase</keyword>
<keyword id="KW-0469">Meiosis</keyword>
<keyword id="KW-0472">Membrane</keyword>
<keyword id="KW-0547">Nucleotide-binding</keyword>
<keyword id="KW-0539">Nucleus</keyword>
<keyword id="KW-1185">Reference proteome</keyword>
<keyword id="KW-0677">Repeat</keyword>
<keyword id="KW-0943">RNA-mediated gene silencing</keyword>
<keyword id="KW-0744">Spermatogenesis</keyword>